<dbReference type="EC" id="1.1.1.330" evidence="2"/>
<dbReference type="EC" id="1.1.1.62" evidence="2"/>
<dbReference type="EMBL" id="AB009304">
    <property type="protein sequence ID" value="BAA23765.1"/>
    <property type="molecule type" value="mRNA"/>
</dbReference>
<dbReference type="SMR" id="O57314"/>
<dbReference type="UniPathway" id="UPA00094"/>
<dbReference type="UniPathway" id="UPA00769"/>
<dbReference type="Proteomes" id="UP000694400">
    <property type="component" value="Unplaced"/>
</dbReference>
<dbReference type="GO" id="GO:0005789">
    <property type="term" value="C:endoplasmic reticulum membrane"/>
    <property type="evidence" value="ECO:0007669"/>
    <property type="project" value="UniProtKB-SubCell"/>
</dbReference>
<dbReference type="GO" id="GO:0004303">
    <property type="term" value="F:estradiol 17-beta-dehydrogenase [NAD(P)+] activity"/>
    <property type="evidence" value="ECO:0007669"/>
    <property type="project" value="UniProtKB-EC"/>
</dbReference>
<dbReference type="GO" id="GO:0141040">
    <property type="term" value="F:very-long-chain 3-oxoacyl-CoA reductase activity"/>
    <property type="evidence" value="ECO:0007669"/>
    <property type="project" value="UniProtKB-EC"/>
</dbReference>
<dbReference type="GO" id="GO:0006703">
    <property type="term" value="P:estrogen biosynthetic process"/>
    <property type="evidence" value="ECO:0007669"/>
    <property type="project" value="UniProtKB-UniPathway"/>
</dbReference>
<dbReference type="GO" id="GO:0006633">
    <property type="term" value="P:fatty acid biosynthetic process"/>
    <property type="evidence" value="ECO:0007669"/>
    <property type="project" value="UniProtKB-UniPathway"/>
</dbReference>
<dbReference type="CDD" id="cd05356">
    <property type="entry name" value="17beta-HSD1_like_SDR_c"/>
    <property type="match status" value="1"/>
</dbReference>
<dbReference type="FunFam" id="3.40.50.720:FF:000137">
    <property type="entry name" value="Hydroxysteroid (17-beta) dehydrogenase 3"/>
    <property type="match status" value="1"/>
</dbReference>
<dbReference type="Gene3D" id="3.40.50.720">
    <property type="entry name" value="NAD(P)-binding Rossmann-like Domain"/>
    <property type="match status" value="1"/>
</dbReference>
<dbReference type="InterPro" id="IPR036291">
    <property type="entry name" value="NAD(P)-bd_dom_sf"/>
</dbReference>
<dbReference type="InterPro" id="IPR020904">
    <property type="entry name" value="Sc_DH/Rdtase_CS"/>
</dbReference>
<dbReference type="InterPro" id="IPR002347">
    <property type="entry name" value="SDR_fam"/>
</dbReference>
<dbReference type="InterPro" id="IPR051019">
    <property type="entry name" value="VLCFA-Steroid_DH"/>
</dbReference>
<dbReference type="PANTHER" id="PTHR43899">
    <property type="entry name" value="RH59310P"/>
    <property type="match status" value="1"/>
</dbReference>
<dbReference type="PANTHER" id="PTHR43899:SF14">
    <property type="entry name" value="VERY-LONG-CHAIN 3-OXOACYL-COA REDUCTASE"/>
    <property type="match status" value="1"/>
</dbReference>
<dbReference type="Pfam" id="PF00106">
    <property type="entry name" value="adh_short"/>
    <property type="match status" value="1"/>
</dbReference>
<dbReference type="PIRSF" id="PIRSF000126">
    <property type="entry name" value="11-beta-HSD1"/>
    <property type="match status" value="1"/>
</dbReference>
<dbReference type="PRINTS" id="PR00081">
    <property type="entry name" value="GDHRDH"/>
</dbReference>
<dbReference type="PRINTS" id="PR00080">
    <property type="entry name" value="SDRFAMILY"/>
</dbReference>
<dbReference type="SUPFAM" id="SSF51735">
    <property type="entry name" value="NAD(P)-binding Rossmann-fold domains"/>
    <property type="match status" value="1"/>
</dbReference>
<dbReference type="PROSITE" id="PS00061">
    <property type="entry name" value="ADH_SHORT"/>
    <property type="match status" value="1"/>
</dbReference>
<keyword id="KW-0256">Endoplasmic reticulum</keyword>
<keyword id="KW-0444">Lipid biosynthesis</keyword>
<keyword id="KW-0443">Lipid metabolism</keyword>
<keyword id="KW-0472">Membrane</keyword>
<keyword id="KW-0521">NADP</keyword>
<keyword id="KW-0560">Oxidoreductase</keyword>
<keyword id="KW-0752">Steroid biosynthesis</keyword>
<keyword id="KW-0812">Transmembrane</keyword>
<keyword id="KW-1133">Transmembrane helix</keyword>
<name>DHB12_ANAPL</name>
<gene>
    <name type="primary">HSD17B12</name>
    <name type="synonym">SPM2</name>
</gene>
<evidence type="ECO:0000250" key="1"/>
<evidence type="ECO:0000250" key="2">
    <source>
        <dbReference type="UniProtKB" id="Q53GQ0"/>
    </source>
</evidence>
<evidence type="ECO:0000255" key="3"/>
<evidence type="ECO:0000255" key="4">
    <source>
        <dbReference type="PROSITE-ProRule" id="PRU10001"/>
    </source>
</evidence>
<evidence type="ECO:0000305" key="5"/>
<reference key="1">
    <citation type="submission" date="1997-11" db="EMBL/GenBank/DDBJ databases">
        <title>Molecular cloning of SPM2 from duckling brain: a putative brain specific steroid dehydrogenase and its induction by imprinting stimuli.</title>
        <authorList>
            <person name="Kimura N."/>
            <person name="Kurosawa N."/>
            <person name="Kondo K."/>
            <person name="Tsukada Y."/>
        </authorList>
    </citation>
    <scope>NUCLEOTIDE SEQUENCE [MRNA]</scope>
    <source>
        <tissue>Forebrain</tissue>
    </source>
</reference>
<proteinExistence type="evidence at transcript level"/>
<comment type="function">
    <text evidence="2">Catalyzes the second of the four reactions of the long-chain fatty acids elongation cycle. This endoplasmic reticulum-bound enzymatic process, allows the addition of two carbons to the chain of long- and very long-chain fatty acids/VLCFAs per cycle. This enzyme has a 3-ketoacyl-CoA reductase activity, reducing 3-ketoacyl-CoA to 3-hydroxyacyl-CoA, within each cycle of fatty acid elongation. Thereby, it may participate in the production of VLCFAs of different chain lengths that are involved in multiple biological processes as precursors of membrane lipids and lipid mediators. May also catalyze the transformation of estrone (E1) into estradiol (E2) and play a role in estrogen formation.</text>
</comment>
<comment type="catalytic activity">
    <reaction evidence="2">
        <text>a very-long-chain (3R)-3-hydroxyacyl-CoA + NADP(+) = a very-long-chain 3-oxoacyl-CoA + NADPH + H(+)</text>
        <dbReference type="Rhea" id="RHEA:48680"/>
        <dbReference type="ChEBI" id="CHEBI:15378"/>
        <dbReference type="ChEBI" id="CHEBI:57783"/>
        <dbReference type="ChEBI" id="CHEBI:58349"/>
        <dbReference type="ChEBI" id="CHEBI:85440"/>
        <dbReference type="ChEBI" id="CHEBI:90725"/>
        <dbReference type="EC" id="1.1.1.330"/>
    </reaction>
</comment>
<comment type="catalytic activity">
    <reaction evidence="2">
        <text>17beta-estradiol + NAD(+) = estrone + NADH + H(+)</text>
        <dbReference type="Rhea" id="RHEA:24612"/>
        <dbReference type="ChEBI" id="CHEBI:15378"/>
        <dbReference type="ChEBI" id="CHEBI:16469"/>
        <dbReference type="ChEBI" id="CHEBI:17263"/>
        <dbReference type="ChEBI" id="CHEBI:57540"/>
        <dbReference type="ChEBI" id="CHEBI:57945"/>
        <dbReference type="EC" id="1.1.1.62"/>
    </reaction>
</comment>
<comment type="catalytic activity">
    <reaction evidence="2">
        <text>17beta-estradiol + NADP(+) = estrone + NADPH + H(+)</text>
        <dbReference type="Rhea" id="RHEA:24616"/>
        <dbReference type="ChEBI" id="CHEBI:15378"/>
        <dbReference type="ChEBI" id="CHEBI:16469"/>
        <dbReference type="ChEBI" id="CHEBI:17263"/>
        <dbReference type="ChEBI" id="CHEBI:57783"/>
        <dbReference type="ChEBI" id="CHEBI:58349"/>
        <dbReference type="EC" id="1.1.1.62"/>
    </reaction>
</comment>
<comment type="catalytic activity">
    <reaction evidence="2">
        <text>3-oxooctadecanoyl-CoA + NADPH + H(+) = (3R)-hydroxyoctadecanoyl-CoA + NADP(+)</text>
        <dbReference type="Rhea" id="RHEA:39151"/>
        <dbReference type="ChEBI" id="CHEBI:15378"/>
        <dbReference type="ChEBI" id="CHEBI:57783"/>
        <dbReference type="ChEBI" id="CHEBI:58349"/>
        <dbReference type="ChEBI" id="CHEBI:71407"/>
        <dbReference type="ChEBI" id="CHEBI:76374"/>
    </reaction>
</comment>
<comment type="catalytic activity">
    <reaction evidence="2">
        <text>(7Z,10Z,13Z,16Z)-3-oxodocosatetraenoyl-CoA + NADPH + H(+) = (3R)-hydroxy-(7Z,10Z,13Z,16Z)-docosatetraenoyl-CoA + NADP(+)</text>
        <dbReference type="Rhea" id="RHEA:39323"/>
        <dbReference type="ChEBI" id="CHEBI:15378"/>
        <dbReference type="ChEBI" id="CHEBI:57783"/>
        <dbReference type="ChEBI" id="CHEBI:58349"/>
        <dbReference type="ChEBI" id="CHEBI:73852"/>
        <dbReference type="ChEBI" id="CHEBI:76415"/>
    </reaction>
</comment>
<comment type="catalytic activity">
    <reaction evidence="2">
        <text>3-oxo-(7Z,10Z,13Z,16Z,19Z)-docosapentaenoyl-CoA + NADPH + H(+) = (3R)-hydroxy-(7Z,10Z,13Z,16Z,19Z)-docosapentaenoyl-CoA + NADP(+)</text>
        <dbReference type="Rhea" id="RHEA:39459"/>
        <dbReference type="ChEBI" id="CHEBI:15378"/>
        <dbReference type="ChEBI" id="CHEBI:57783"/>
        <dbReference type="ChEBI" id="CHEBI:58349"/>
        <dbReference type="ChEBI" id="CHEBI:73863"/>
        <dbReference type="ChEBI" id="CHEBI:76460"/>
    </reaction>
</comment>
<comment type="catalytic activity">
    <reaction evidence="2">
        <text>(8Z,11Z,14Z)-3-oxoeicosatrienoyl-CoA + NADPH + H(+) = (3R)-hydroxy-(8Z,11Z,14Z)-eicosatrienoyl-CoA + NADP(+)</text>
        <dbReference type="Rhea" id="RHEA:39311"/>
        <dbReference type="ChEBI" id="CHEBI:15378"/>
        <dbReference type="ChEBI" id="CHEBI:57783"/>
        <dbReference type="ChEBI" id="CHEBI:58349"/>
        <dbReference type="ChEBI" id="CHEBI:71481"/>
        <dbReference type="ChEBI" id="CHEBI:76411"/>
    </reaction>
</comment>
<comment type="pathway">
    <text evidence="2">Lipid metabolism; fatty acid biosynthesis.</text>
</comment>
<comment type="pathway">
    <text evidence="2">Steroid biosynthesis; estrogen biosynthesis.</text>
</comment>
<comment type="subcellular location">
    <subcellularLocation>
        <location evidence="2">Endoplasmic reticulum membrane</location>
        <topology evidence="2">Multi-pass membrane protein</topology>
    </subcellularLocation>
</comment>
<comment type="tissue specificity">
    <text>Brain.</text>
</comment>
<comment type="similarity">
    <text evidence="5">Belongs to the short-chain dehydrogenases/reductases (SDR) family. 17-beta-HSD 3 subfamily.</text>
</comment>
<accession>O57314</accession>
<feature type="chain" id="PRO_0000054577" description="Very-long-chain 3-oxoacyl-CoA reductase">
    <location>
        <begin position="1"/>
        <end position="312"/>
    </location>
</feature>
<feature type="transmembrane region" description="Helical" evidence="3">
    <location>
        <begin position="33"/>
        <end position="53"/>
    </location>
</feature>
<feature type="transmembrane region" description="Helical" evidence="3">
    <location>
        <begin position="181"/>
        <end position="201"/>
    </location>
</feature>
<feature type="transmembrane region" description="Helical" evidence="3">
    <location>
        <begin position="274"/>
        <end position="294"/>
    </location>
</feature>
<feature type="active site" description="Proton acceptor" evidence="4">
    <location>
        <position position="201"/>
    </location>
</feature>
<feature type="binding site" evidence="1">
    <location>
        <begin position="48"/>
        <end position="77"/>
    </location>
    <ligand>
        <name>NADP(+)</name>
        <dbReference type="ChEBI" id="CHEBI:58349"/>
    </ligand>
</feature>
<feature type="binding site" evidence="1">
    <location>
        <position position="188"/>
    </location>
    <ligand>
        <name>substrate</name>
    </ligand>
</feature>
<sequence>MLPAAGLLWWVGALGALYAAVRGALGLLGALRVWGIGAGRAALGPGLGAWAVVTGATDGIGKAYAKELAKRGMKVALISRSKEKLDQVAGEITEQYGVETKVIVADFGEREDIYDRIRAGLEGLEIGVLVNNVGISYSYPEYFIDVPDLDKTIDKMININIMSVCKMTRLVLPGMLERSKGVILNISSAAGMYPTPLLTLYSASKAFVDYFSRGLHAEYKSKGIIVQSVMPYYVATKMSKISKPSFDKPTPETYVRAAIGTVGLQSQTNGCLPHAFMGWVFSILPTSTVMNLLMKTNKQIRARFLKKKMKEK</sequence>
<organism>
    <name type="scientific">Anas platyrhynchos</name>
    <name type="common">Mallard</name>
    <name type="synonym">Anas boschas</name>
    <dbReference type="NCBI Taxonomy" id="8839"/>
    <lineage>
        <taxon>Eukaryota</taxon>
        <taxon>Metazoa</taxon>
        <taxon>Chordata</taxon>
        <taxon>Craniata</taxon>
        <taxon>Vertebrata</taxon>
        <taxon>Euteleostomi</taxon>
        <taxon>Archelosauria</taxon>
        <taxon>Archosauria</taxon>
        <taxon>Dinosauria</taxon>
        <taxon>Saurischia</taxon>
        <taxon>Theropoda</taxon>
        <taxon>Coelurosauria</taxon>
        <taxon>Aves</taxon>
        <taxon>Neognathae</taxon>
        <taxon>Galloanserae</taxon>
        <taxon>Anseriformes</taxon>
        <taxon>Anatidae</taxon>
        <taxon>Anatinae</taxon>
        <taxon>Anas</taxon>
    </lineage>
</organism>
<protein>
    <recommendedName>
        <fullName evidence="5">Very-long-chain 3-oxoacyl-CoA reductase</fullName>
        <ecNumber evidence="2">1.1.1.330</ecNumber>
    </recommendedName>
    <alternativeName>
        <fullName evidence="2">17-beta-hydroxysteroid dehydrogenase 12</fullName>
        <shortName evidence="2">17-beta-HSD 12</shortName>
    </alternativeName>
    <alternativeName>
        <fullName evidence="2">3-ketoacyl-CoA reductase</fullName>
        <shortName evidence="2">KAR</shortName>
    </alternativeName>
    <alternativeName>
        <fullName evidence="2">Estradiol 17-beta-dehydrogenase 12</fullName>
        <ecNumber evidence="2">1.1.1.62</ecNumber>
    </alternativeName>
</protein>